<comment type="function">
    <text evidence="1">Activates expression of the rhaBAD and rhaT operons.</text>
</comment>
<comment type="subunit">
    <text evidence="1">Binds DNA as a dimer.</text>
</comment>
<comment type="subcellular location">
    <subcellularLocation>
        <location evidence="1">Cytoplasm</location>
    </subcellularLocation>
</comment>
<organism>
    <name type="scientific">Enterobacter sp. (strain 638)</name>
    <dbReference type="NCBI Taxonomy" id="399742"/>
    <lineage>
        <taxon>Bacteria</taxon>
        <taxon>Pseudomonadati</taxon>
        <taxon>Pseudomonadota</taxon>
        <taxon>Gammaproteobacteria</taxon>
        <taxon>Enterobacterales</taxon>
        <taxon>Enterobacteriaceae</taxon>
        <taxon>Enterobacter</taxon>
    </lineage>
</organism>
<accession>A4WG91</accession>
<reference key="1">
    <citation type="journal article" date="2010" name="PLoS Genet.">
        <title>Genome sequence of the plant growth promoting endophytic bacterium Enterobacter sp. 638.</title>
        <authorList>
            <person name="Taghavi S."/>
            <person name="van der Lelie D."/>
            <person name="Hoffman A."/>
            <person name="Zhang Y.B."/>
            <person name="Walla M.D."/>
            <person name="Vangronsveld J."/>
            <person name="Newman L."/>
            <person name="Monchy S."/>
        </authorList>
    </citation>
    <scope>NUCLEOTIDE SEQUENCE [LARGE SCALE GENOMIC DNA]</scope>
    <source>
        <strain>638</strain>
    </source>
</reference>
<sequence>MTVLHSVDFFPSGHSPVAIEPRLPQAAFPEHHHDFHEIVIVEHGTGIHVFNGQPYTISGGTVCFVRDHDRHMYEHTDNLCLTNVLYRSPDAFQFLSGLNQLLPQEKDGHYPSHWRVNQSTLQQVRQLVTQMEQAEENTESHALASRELTFMQLLVLLRRSSLVEGLENNDARLNQLMAWLEDHFAEEVSWETVADVFSLSLRTLHRQLKQHTGLTPQRYLNRLRLIKARHLLRHTDESVTDIAYRCGFGDSNHFSTLFRREFSWSPREIRQGRDASLQ</sequence>
<name>RHAS_ENT38</name>
<dbReference type="EMBL" id="CP000653">
    <property type="protein sequence ID" value="ABP62721.1"/>
    <property type="molecule type" value="Genomic_DNA"/>
</dbReference>
<dbReference type="RefSeq" id="WP_015961025.1">
    <property type="nucleotide sequence ID" value="NC_009436.1"/>
</dbReference>
<dbReference type="SMR" id="A4WG91"/>
<dbReference type="STRING" id="399742.Ent638_4066"/>
<dbReference type="KEGG" id="ent:Ent638_4066"/>
<dbReference type="eggNOG" id="COG4977">
    <property type="taxonomic scope" value="Bacteria"/>
</dbReference>
<dbReference type="HOGENOM" id="CLU_000445_88_5_6"/>
<dbReference type="OrthoDB" id="2547276at2"/>
<dbReference type="Proteomes" id="UP000000230">
    <property type="component" value="Chromosome"/>
</dbReference>
<dbReference type="GO" id="GO:0005737">
    <property type="term" value="C:cytoplasm"/>
    <property type="evidence" value="ECO:0007669"/>
    <property type="project" value="UniProtKB-SubCell"/>
</dbReference>
<dbReference type="GO" id="GO:0003700">
    <property type="term" value="F:DNA-binding transcription factor activity"/>
    <property type="evidence" value="ECO:0007669"/>
    <property type="project" value="UniProtKB-UniRule"/>
</dbReference>
<dbReference type="GO" id="GO:0043565">
    <property type="term" value="F:sequence-specific DNA binding"/>
    <property type="evidence" value="ECO:0007669"/>
    <property type="project" value="InterPro"/>
</dbReference>
<dbReference type="GO" id="GO:0045893">
    <property type="term" value="P:positive regulation of DNA-templated transcription"/>
    <property type="evidence" value="ECO:0007669"/>
    <property type="project" value="UniProtKB-UniRule"/>
</dbReference>
<dbReference type="GO" id="GO:0019299">
    <property type="term" value="P:rhamnose metabolic process"/>
    <property type="evidence" value="ECO:0007669"/>
    <property type="project" value="UniProtKB-UniRule"/>
</dbReference>
<dbReference type="CDD" id="cd06977">
    <property type="entry name" value="cupin_RhaR_RhaS-like_N"/>
    <property type="match status" value="1"/>
</dbReference>
<dbReference type="Gene3D" id="1.10.10.60">
    <property type="entry name" value="Homeodomain-like"/>
    <property type="match status" value="1"/>
</dbReference>
<dbReference type="Gene3D" id="2.60.120.10">
    <property type="entry name" value="Jelly Rolls"/>
    <property type="match status" value="1"/>
</dbReference>
<dbReference type="HAMAP" id="MF_01534">
    <property type="entry name" value="HTH_type_RhaS"/>
    <property type="match status" value="1"/>
</dbReference>
<dbReference type="InterPro" id="IPR003313">
    <property type="entry name" value="AraC-bd"/>
</dbReference>
<dbReference type="InterPro" id="IPR050204">
    <property type="entry name" value="AraC_XylS_family_regulators"/>
</dbReference>
<dbReference type="InterPro" id="IPR009057">
    <property type="entry name" value="Homeodomain-like_sf"/>
</dbReference>
<dbReference type="InterPro" id="IPR037923">
    <property type="entry name" value="HTH-like"/>
</dbReference>
<dbReference type="InterPro" id="IPR018060">
    <property type="entry name" value="HTH_AraC"/>
</dbReference>
<dbReference type="InterPro" id="IPR018062">
    <property type="entry name" value="HTH_AraC-typ_CS"/>
</dbReference>
<dbReference type="InterPro" id="IPR047220">
    <property type="entry name" value="RhaR_RhaS-like_N"/>
</dbReference>
<dbReference type="InterPro" id="IPR014710">
    <property type="entry name" value="RmlC-like_jellyroll"/>
</dbReference>
<dbReference type="InterPro" id="IPR020449">
    <property type="entry name" value="Tscrpt_reg_AraC-type_HTH"/>
</dbReference>
<dbReference type="InterPro" id="IPR023609">
    <property type="entry name" value="Tscrpt_reg_HTH_RhaS"/>
</dbReference>
<dbReference type="NCBIfam" id="NF010028">
    <property type="entry name" value="PRK13503.1"/>
    <property type="match status" value="1"/>
</dbReference>
<dbReference type="PANTHER" id="PTHR46796:SF13">
    <property type="entry name" value="HTH-TYPE TRANSCRIPTIONAL ACTIVATOR RHAS"/>
    <property type="match status" value="1"/>
</dbReference>
<dbReference type="PANTHER" id="PTHR46796">
    <property type="entry name" value="HTH-TYPE TRANSCRIPTIONAL ACTIVATOR RHAS-RELATED"/>
    <property type="match status" value="1"/>
</dbReference>
<dbReference type="Pfam" id="PF02311">
    <property type="entry name" value="AraC_binding"/>
    <property type="match status" value="1"/>
</dbReference>
<dbReference type="Pfam" id="PF12833">
    <property type="entry name" value="HTH_18"/>
    <property type="match status" value="1"/>
</dbReference>
<dbReference type="PRINTS" id="PR00032">
    <property type="entry name" value="HTHARAC"/>
</dbReference>
<dbReference type="SMART" id="SM00342">
    <property type="entry name" value="HTH_ARAC"/>
    <property type="match status" value="1"/>
</dbReference>
<dbReference type="SUPFAM" id="SSF46689">
    <property type="entry name" value="Homeodomain-like"/>
    <property type="match status" value="2"/>
</dbReference>
<dbReference type="SUPFAM" id="SSF51215">
    <property type="entry name" value="Regulatory protein AraC"/>
    <property type="match status" value="1"/>
</dbReference>
<dbReference type="PROSITE" id="PS00041">
    <property type="entry name" value="HTH_ARAC_FAMILY_1"/>
    <property type="match status" value="1"/>
</dbReference>
<dbReference type="PROSITE" id="PS01124">
    <property type="entry name" value="HTH_ARAC_FAMILY_2"/>
    <property type="match status" value="1"/>
</dbReference>
<feature type="chain" id="PRO_1000068705" description="HTH-type transcriptional activator RhaS">
    <location>
        <begin position="1"/>
        <end position="278"/>
    </location>
</feature>
<feature type="domain" description="HTH araC/xylS-type" evidence="1">
    <location>
        <begin position="174"/>
        <end position="272"/>
    </location>
</feature>
<feature type="DNA-binding region" description="H-T-H motif" evidence="1">
    <location>
        <begin position="191"/>
        <end position="212"/>
    </location>
</feature>
<feature type="DNA-binding region" description="H-T-H motif" evidence="1">
    <location>
        <begin position="239"/>
        <end position="262"/>
    </location>
</feature>
<feature type="site" description="Interaction with sigma-70" evidence="1">
    <location>
        <position position="241"/>
    </location>
</feature>
<feature type="site" description="Interaction with sigma-70" evidence="1">
    <location>
        <position position="250"/>
    </location>
</feature>
<gene>
    <name evidence="1" type="primary">rhaS</name>
    <name type="ordered locus">Ent638_4066</name>
</gene>
<evidence type="ECO:0000255" key="1">
    <source>
        <dbReference type="HAMAP-Rule" id="MF_01534"/>
    </source>
</evidence>
<proteinExistence type="inferred from homology"/>
<keyword id="KW-0010">Activator</keyword>
<keyword id="KW-0963">Cytoplasm</keyword>
<keyword id="KW-0238">DNA-binding</keyword>
<keyword id="KW-0677">Repeat</keyword>
<keyword id="KW-0684">Rhamnose metabolism</keyword>
<keyword id="KW-0804">Transcription</keyword>
<keyword id="KW-0805">Transcription regulation</keyword>
<protein>
    <recommendedName>
        <fullName evidence="1">HTH-type transcriptional activator RhaS</fullName>
    </recommendedName>
    <alternativeName>
        <fullName evidence="1">L-rhamnose operon regulatory protein RhaS</fullName>
    </alternativeName>
</protein>